<dbReference type="EC" id="3.2.1.22"/>
<dbReference type="EMBL" id="DS499597">
    <property type="protein sequence ID" value="EDP51064.1"/>
    <property type="molecule type" value="Genomic_DNA"/>
</dbReference>
<dbReference type="SMR" id="B0Y224"/>
<dbReference type="GlyCosmos" id="B0Y224">
    <property type="glycosylation" value="4 sites, No reported glycans"/>
</dbReference>
<dbReference type="EnsemblFungi" id="EDP51064">
    <property type="protein sequence ID" value="EDP51064"/>
    <property type="gene ID" value="AFUB_050660"/>
</dbReference>
<dbReference type="HOGENOM" id="CLU_013093_2_2_1"/>
<dbReference type="OrthoDB" id="36816at5052"/>
<dbReference type="PhylomeDB" id="B0Y224"/>
<dbReference type="Proteomes" id="UP000001699">
    <property type="component" value="Unassembled WGS sequence"/>
</dbReference>
<dbReference type="GO" id="GO:0005576">
    <property type="term" value="C:extracellular region"/>
    <property type="evidence" value="ECO:0007669"/>
    <property type="project" value="UniProtKB-SubCell"/>
</dbReference>
<dbReference type="GO" id="GO:0004557">
    <property type="term" value="F:alpha-galactosidase activity"/>
    <property type="evidence" value="ECO:0007669"/>
    <property type="project" value="UniProtKB-EC"/>
</dbReference>
<dbReference type="GO" id="GO:0005975">
    <property type="term" value="P:carbohydrate metabolic process"/>
    <property type="evidence" value="ECO:0007669"/>
    <property type="project" value="InterPro"/>
</dbReference>
<dbReference type="CDD" id="cd14792">
    <property type="entry name" value="GH27"/>
    <property type="match status" value="1"/>
</dbReference>
<dbReference type="FunFam" id="2.60.40.1180:FF:000049">
    <property type="entry name" value="Alpha-galactosidase"/>
    <property type="match status" value="1"/>
</dbReference>
<dbReference type="FunFam" id="3.20.20.70:FF:000307">
    <property type="entry name" value="Alpha-galactosidase"/>
    <property type="match status" value="1"/>
</dbReference>
<dbReference type="Gene3D" id="3.20.20.70">
    <property type="entry name" value="Aldolase class I"/>
    <property type="match status" value="1"/>
</dbReference>
<dbReference type="Gene3D" id="2.60.40.1180">
    <property type="entry name" value="Golgi alpha-mannosidase II"/>
    <property type="match status" value="1"/>
</dbReference>
<dbReference type="InterPro" id="IPR013785">
    <property type="entry name" value="Aldolase_TIM"/>
</dbReference>
<dbReference type="InterPro" id="IPR002241">
    <property type="entry name" value="Glyco_hydro_27"/>
</dbReference>
<dbReference type="InterPro" id="IPR000111">
    <property type="entry name" value="Glyco_hydro_27/36_CS"/>
</dbReference>
<dbReference type="InterPro" id="IPR013780">
    <property type="entry name" value="Glyco_hydro_b"/>
</dbReference>
<dbReference type="InterPro" id="IPR017853">
    <property type="entry name" value="Glycoside_hydrolase_SF"/>
</dbReference>
<dbReference type="InterPro" id="IPR041233">
    <property type="entry name" value="Melibiase_C"/>
</dbReference>
<dbReference type="PANTHER" id="PTHR11452:SF61">
    <property type="entry name" value="ALPHA-GALACTOSIDASE B-RELATED"/>
    <property type="match status" value="1"/>
</dbReference>
<dbReference type="PANTHER" id="PTHR11452">
    <property type="entry name" value="ALPHA-GALACTOSIDASE/ALPHA-N-ACETYLGALACTOSAMINIDASE"/>
    <property type="match status" value="1"/>
</dbReference>
<dbReference type="Pfam" id="PF16499">
    <property type="entry name" value="Melibiase_2"/>
    <property type="match status" value="2"/>
</dbReference>
<dbReference type="Pfam" id="PF17801">
    <property type="entry name" value="Melibiase_C"/>
    <property type="match status" value="1"/>
</dbReference>
<dbReference type="PRINTS" id="PR00740">
    <property type="entry name" value="GLHYDRLASE27"/>
</dbReference>
<dbReference type="SUPFAM" id="SSF51445">
    <property type="entry name" value="(Trans)glycosidases"/>
    <property type="match status" value="1"/>
</dbReference>
<dbReference type="SUPFAM" id="SSF51011">
    <property type="entry name" value="Glycosyl hydrolase domain"/>
    <property type="match status" value="1"/>
</dbReference>
<dbReference type="PROSITE" id="PS00512">
    <property type="entry name" value="ALPHA_GALACTOSIDASE"/>
    <property type="match status" value="1"/>
</dbReference>
<keyword id="KW-1015">Disulfide bond</keyword>
<keyword id="KW-0325">Glycoprotein</keyword>
<keyword id="KW-0326">Glycosidase</keyword>
<keyword id="KW-0378">Hydrolase</keyword>
<keyword id="KW-0964">Secreted</keyword>
<keyword id="KW-0732">Signal</keyword>
<comment type="function">
    <text evidence="1">Hydrolyzes a variety of simple alpha-D-galactoside as well as more complex molecules such as oligosaccharides and polysaccharides.</text>
</comment>
<comment type="catalytic activity">
    <reaction>
        <text>Hydrolysis of terminal, non-reducing alpha-D-galactose residues in alpha-D-galactosides, including galactose oligosaccharides, galactomannans and galactolipids.</text>
        <dbReference type="EC" id="3.2.1.22"/>
    </reaction>
</comment>
<comment type="subcellular location">
    <subcellularLocation>
        <location evidence="3">Secreted</location>
    </subcellularLocation>
</comment>
<comment type="similarity">
    <text evidence="3">Belongs to the glycosyl hydrolase 27 family.</text>
</comment>
<proteinExistence type="inferred from homology"/>
<name>AGALB_ASPFC</name>
<gene>
    <name type="primary">aglB</name>
    <name type="ORF">AFUB_050660</name>
</gene>
<protein>
    <recommendedName>
        <fullName>Probable alpha-galactosidase B</fullName>
        <ecNumber>3.2.1.22</ecNumber>
    </recommendedName>
    <alternativeName>
        <fullName>Melibiase B</fullName>
    </alternativeName>
</protein>
<sequence length="426" mass="47215">MSRSKTRQGKLPALGWNTWNAFGCDIDATKIMTAANEVVNLGLKDLGYEYINIDDCWSVKSGRDASTQRIIPDPDKFPDGISGVADQIHDLGLKIGIYSSAGLTTCAGYPASLGYEDIDAQTFAEWGIDYLKYDNCGVPSNWTDTYTYCVPDPGSKATNGTCPDNKNPAPAGYDWRTSLTAERYRRMRDALVSVDRTILYSLCEWGQANVNDWGNETGNSWRTTGDITPSWPRIAAIANENSFLMNHVDFWGYPDPDMLEVGNGNLTLAENRAHFALWAAMKSPLIIGTALDSISQDHLAILSNKILLKFHQDPVIGRPAQPYKWGYNPDWTFDPAHPAEYWSGASSVLGGTLVLMLNSEDTTQRRTAVWKEVPELKDVLGRQGKRRIGFRVTDVWTGKDLGCVRDHYSVELESHDVAALVVGRAC</sequence>
<organism>
    <name type="scientific">Aspergillus fumigatus (strain CBS 144.89 / FGSC A1163 / CEA10)</name>
    <name type="common">Neosartorya fumigata</name>
    <dbReference type="NCBI Taxonomy" id="451804"/>
    <lineage>
        <taxon>Eukaryota</taxon>
        <taxon>Fungi</taxon>
        <taxon>Dikarya</taxon>
        <taxon>Ascomycota</taxon>
        <taxon>Pezizomycotina</taxon>
        <taxon>Eurotiomycetes</taxon>
        <taxon>Eurotiomycetidae</taxon>
        <taxon>Eurotiales</taxon>
        <taxon>Aspergillaceae</taxon>
        <taxon>Aspergillus</taxon>
        <taxon>Aspergillus subgen. Fumigati</taxon>
    </lineage>
</organism>
<feature type="signal peptide" evidence="2">
    <location>
        <begin position="1"/>
        <end position="13"/>
    </location>
</feature>
<feature type="chain" id="PRO_0000393215" description="Probable alpha-galactosidase B">
    <location>
        <begin position="14"/>
        <end position="426"/>
    </location>
</feature>
<feature type="active site" description="Nucleophile" evidence="1">
    <location>
        <position position="134"/>
    </location>
</feature>
<feature type="active site" description="Proton donor" evidence="1">
    <location>
        <position position="226"/>
    </location>
</feature>
<feature type="binding site" evidence="1">
    <location>
        <begin position="204"/>
        <end position="208"/>
    </location>
    <ligand>
        <name>substrate</name>
    </ligand>
</feature>
<feature type="glycosylation site" description="N-linked (GlcNAc...) asparagine" evidence="2">
    <location>
        <position position="141"/>
    </location>
</feature>
<feature type="glycosylation site" description="N-linked (GlcNAc...) asparagine" evidence="2">
    <location>
        <position position="159"/>
    </location>
</feature>
<feature type="glycosylation site" description="N-linked (GlcNAc...) asparagine" evidence="2">
    <location>
        <position position="215"/>
    </location>
</feature>
<feature type="glycosylation site" description="N-linked (GlcNAc...) asparagine" evidence="2">
    <location>
        <position position="265"/>
    </location>
</feature>
<feature type="disulfide bond" evidence="1">
    <location>
        <begin position="24"/>
        <end position="56"/>
    </location>
</feature>
<feature type="disulfide bond" evidence="1">
    <location>
        <begin position="106"/>
        <end position="136"/>
    </location>
</feature>
<reference key="1">
    <citation type="journal article" date="2008" name="PLoS Genet.">
        <title>Genomic islands in the pathogenic filamentous fungus Aspergillus fumigatus.</title>
        <authorList>
            <person name="Fedorova N.D."/>
            <person name="Khaldi N."/>
            <person name="Joardar V.S."/>
            <person name="Maiti R."/>
            <person name="Amedeo P."/>
            <person name="Anderson M.J."/>
            <person name="Crabtree J."/>
            <person name="Silva J.C."/>
            <person name="Badger J.H."/>
            <person name="Albarraq A."/>
            <person name="Angiuoli S."/>
            <person name="Bussey H."/>
            <person name="Bowyer P."/>
            <person name="Cotty P.J."/>
            <person name="Dyer P.S."/>
            <person name="Egan A."/>
            <person name="Galens K."/>
            <person name="Fraser-Liggett C.M."/>
            <person name="Haas B.J."/>
            <person name="Inman J.M."/>
            <person name="Kent R."/>
            <person name="Lemieux S."/>
            <person name="Malavazi I."/>
            <person name="Orvis J."/>
            <person name="Roemer T."/>
            <person name="Ronning C.M."/>
            <person name="Sundaram J.P."/>
            <person name="Sutton G."/>
            <person name="Turner G."/>
            <person name="Venter J.C."/>
            <person name="White O.R."/>
            <person name="Whitty B.R."/>
            <person name="Youngman P."/>
            <person name="Wolfe K.H."/>
            <person name="Goldman G.H."/>
            <person name="Wortman J.R."/>
            <person name="Jiang B."/>
            <person name="Denning D.W."/>
            <person name="Nierman W.C."/>
        </authorList>
    </citation>
    <scope>NUCLEOTIDE SEQUENCE [LARGE SCALE GENOMIC DNA]</scope>
    <source>
        <strain>CBS 144.89 / FGSC A1163 / CEA10</strain>
    </source>
</reference>
<evidence type="ECO:0000250" key="1"/>
<evidence type="ECO:0000255" key="2"/>
<evidence type="ECO:0000305" key="3"/>
<accession>B0Y224</accession>